<name>RPCH_CALSI</name>
<reference key="1">
    <citation type="journal article" date="1995" name="Biochem. Biophys. Res. Commun.">
        <title>A highly conserved red pigment-concentrating hormone precursor in the blue crab Callinectes sapidus.</title>
        <authorList>
            <person name="Klein J.M."/>
            <person name="Mohrherr C.J."/>
            <person name="Sleutels F."/>
            <person name="Jaenecke N."/>
            <person name="Riehm J.P."/>
            <person name="Rao K.R."/>
        </authorList>
    </citation>
    <scope>NUCLEOTIDE SEQUENCE [MRNA]</scope>
    <source>
        <tissue>Eyestalk</tissue>
    </source>
</reference>
<reference key="2">
    <citation type="submission" date="1997-10" db="EMBL/GenBank/DDBJ databases">
        <authorList>
            <person name="Martinez F."/>
            <person name="Valdez J."/>
            <person name="Zinker S."/>
            <person name="Arechiga H."/>
        </authorList>
    </citation>
    <scope>NUCLEOTIDE SEQUENCE [GENOMIC DNA]</scope>
</reference>
<protein>
    <recommendedName>
        <fullName>Red pigment-concentrating prohormone</fullName>
    </recommendedName>
    <component>
        <recommendedName>
            <fullName>Red pigment-concentrating hormone</fullName>
            <shortName>RPCH</shortName>
        </recommendedName>
    </component>
    <component>
        <recommendedName>
            <fullName>RPCH-related peptide</fullName>
        </recommendedName>
    </component>
</protein>
<organism>
    <name type="scientific">Callinectes sapidus</name>
    <name type="common">Blue crab</name>
    <dbReference type="NCBI Taxonomy" id="6763"/>
    <lineage>
        <taxon>Eukaryota</taxon>
        <taxon>Metazoa</taxon>
        <taxon>Ecdysozoa</taxon>
        <taxon>Arthropoda</taxon>
        <taxon>Crustacea</taxon>
        <taxon>Multicrustacea</taxon>
        <taxon>Malacostraca</taxon>
        <taxon>Eumalacostraca</taxon>
        <taxon>Eucarida</taxon>
        <taxon>Decapoda</taxon>
        <taxon>Pleocyemata</taxon>
        <taxon>Brachyura</taxon>
        <taxon>Eubrachyura</taxon>
        <taxon>Portunoidea</taxon>
        <taxon>Portunidae</taxon>
        <taxon>Portuninae</taxon>
        <taxon>Callinectes</taxon>
    </lineage>
</organism>
<accession>Q23757</accession>
<comment type="function">
    <text>This hormone adapts the animal to light backgrounds by stimulating concentration of the pigment of its red body-chromatophores.</text>
</comment>
<comment type="subcellular location">
    <subcellularLocation>
        <location>Secreted</location>
    </subcellularLocation>
</comment>
<comment type="similarity">
    <text evidence="3">Belongs to the AKH/HRTH/RPCH family.</text>
</comment>
<dbReference type="EMBL" id="L36824">
    <property type="protein sequence ID" value="AAC37244.1"/>
    <property type="molecule type" value="mRNA"/>
</dbReference>
<dbReference type="EMBL" id="AF031654">
    <property type="protein sequence ID" value="AAF21244.1"/>
    <property type="molecule type" value="Genomic_DNA"/>
</dbReference>
<dbReference type="SMR" id="Q23757"/>
<dbReference type="GO" id="GO:0005576">
    <property type="term" value="C:extracellular region"/>
    <property type="evidence" value="ECO:0007669"/>
    <property type="project" value="UniProtKB-SubCell"/>
</dbReference>
<dbReference type="GO" id="GO:0005179">
    <property type="term" value="F:hormone activity"/>
    <property type="evidence" value="ECO:0007669"/>
    <property type="project" value="UniProtKB-KW"/>
</dbReference>
<dbReference type="GO" id="GO:0031409">
    <property type="term" value="F:pigment binding"/>
    <property type="evidence" value="ECO:0007669"/>
    <property type="project" value="UniProtKB-KW"/>
</dbReference>
<dbReference type="InterPro" id="IPR002047">
    <property type="entry name" value="Adipokinetic_hormone_CS"/>
</dbReference>
<dbReference type="InterPro" id="IPR010475">
    <property type="entry name" value="AKH/RPCH_hormone"/>
</dbReference>
<dbReference type="Pfam" id="PF06377">
    <property type="entry name" value="Adipokin_hormo"/>
    <property type="match status" value="1"/>
</dbReference>
<dbReference type="PROSITE" id="PS00256">
    <property type="entry name" value="AKH"/>
    <property type="match status" value="1"/>
</dbReference>
<proteinExistence type="inferred from homology"/>
<sequence length="109" mass="10929">MVRRSGVTLLVVALLVVTLMSSVSAQLNFSPGWGKRAAGASGSNGGVGEAVSGLHPSVGGAPGGVVPPGSSSPGDSCGPIPVSAVMHIYRLIRSEAVRLVQCQDEEYLG</sequence>
<feature type="signal peptide" evidence="1">
    <location>
        <begin position="1"/>
        <end position="25"/>
    </location>
</feature>
<feature type="chain" id="PRO_0000000934" description="Red pigment-concentrating prohormone">
    <location>
        <begin position="26"/>
        <end position="109"/>
    </location>
</feature>
<feature type="peptide" id="PRO_0000000935" description="Red pigment-concentrating hormone">
    <location>
        <begin position="26"/>
        <end position="33"/>
    </location>
</feature>
<feature type="chain" id="PRO_0000000936" description="RPCH-related peptide">
    <location>
        <begin position="37"/>
        <end position="109"/>
    </location>
</feature>
<feature type="region of interest" description="Disordered" evidence="2">
    <location>
        <begin position="34"/>
        <end position="78"/>
    </location>
</feature>
<feature type="compositionally biased region" description="Low complexity" evidence="2">
    <location>
        <begin position="49"/>
        <end position="59"/>
    </location>
</feature>
<feature type="compositionally biased region" description="Low complexity" evidence="2">
    <location>
        <begin position="67"/>
        <end position="78"/>
    </location>
</feature>
<feature type="modified residue" description="Pyrrolidone carboxylic acid" evidence="1">
    <location>
        <position position="26"/>
    </location>
</feature>
<feature type="modified residue" description="Tryptophan amide" evidence="1">
    <location>
        <position position="33"/>
    </location>
</feature>
<evidence type="ECO:0000250" key="1"/>
<evidence type="ECO:0000256" key="2">
    <source>
        <dbReference type="SAM" id="MobiDB-lite"/>
    </source>
</evidence>
<evidence type="ECO:0000305" key="3"/>
<keyword id="KW-0027">Amidation</keyword>
<keyword id="KW-0165">Cleavage on pair of basic residues</keyword>
<keyword id="KW-0372">Hormone</keyword>
<keyword id="KW-0608">Pigment</keyword>
<keyword id="KW-0873">Pyrrolidone carboxylic acid</keyword>
<keyword id="KW-0964">Secreted</keyword>
<keyword id="KW-0732">Signal</keyword>